<organism>
    <name type="scientific">Acinetobacter baylyi (strain ATCC 33305 / BD413 / ADP1)</name>
    <dbReference type="NCBI Taxonomy" id="62977"/>
    <lineage>
        <taxon>Bacteria</taxon>
        <taxon>Pseudomonadati</taxon>
        <taxon>Pseudomonadota</taxon>
        <taxon>Gammaproteobacteria</taxon>
        <taxon>Moraxellales</taxon>
        <taxon>Moraxellaceae</taxon>
        <taxon>Acinetobacter</taxon>
    </lineage>
</organism>
<proteinExistence type="inferred from homology"/>
<sequence>MAETDIAMPESTPVDSRPAFAIVEELKTKFGENFYVQTTCEEFPTVWVERSRVQEVLMFLRKVDRPYVMLFDLSAMDERLRVHRDGLPASDFTVFYHLLSLERNSDIRIKVALNESDLNIPTATNIWPNANWYEREAYDMFGINFEGHPMLRRILLPTYWEGHPLRKEYSARATEYTPYMQNQAKQDFEQEHLRFVPEDWGLKRGNADEDFMFLNLGPNHPSAHGAFRVVLQLDGEEVKDCVPDIGYHHRGVEKMAERQTWHSFIPYTDRVDYLGGCAQNMPYVMAVEQLAGIKVPERAQVIRVMLNELFRINNHLLFCGTAIQDAGGMTPVFYMFADRQKVYDIVEAITGYRMHPAWFRIGGTAHDLPNNWHKLVKELLEWMPKRLNEYHTAALKNSVFIGRTRNVAQYDAKSALAWGVTGTGLRATGIDFDVRKYRPYSGYENFDFDVPLEYEGDAYARVMVHFREITESLKIIQQCLDNMPSGPYKADHPLAVPPPKDKTLQDIETLITHFLSVSWGPVMPAGEASFMTEVVKGASTYYLTSDKSTMSYRTRIRTPTFTHLQQMPSVINGSLVSDLIIYLATIDVVMADVDR</sequence>
<protein>
    <recommendedName>
        <fullName evidence="1">NADH-quinone oxidoreductase subunit C/D</fullName>
        <ecNumber evidence="1">7.1.1.-</ecNumber>
    </recommendedName>
    <alternativeName>
        <fullName evidence="1">NADH dehydrogenase I subunit C/D</fullName>
    </alternativeName>
    <alternativeName>
        <fullName evidence="1">NDH-1 subunit C/D</fullName>
    </alternativeName>
</protein>
<gene>
    <name evidence="1" type="primary">nuoC</name>
    <name evidence="1" type="synonym">nuoCD</name>
    <name evidence="1" type="synonym">nuoD</name>
    <name type="ordered locus">ACIAD0733</name>
</gene>
<accession>Q6FE69</accession>
<reference key="1">
    <citation type="journal article" date="2004" name="Nucleic Acids Res.">
        <title>Unique features revealed by the genome sequence of Acinetobacter sp. ADP1, a versatile and naturally transformation competent bacterium.</title>
        <authorList>
            <person name="Barbe V."/>
            <person name="Vallenet D."/>
            <person name="Fonknechten N."/>
            <person name="Kreimeyer A."/>
            <person name="Oztas S."/>
            <person name="Labarre L."/>
            <person name="Cruveiller S."/>
            <person name="Robert C."/>
            <person name="Duprat S."/>
            <person name="Wincker P."/>
            <person name="Ornston L.N."/>
            <person name="Weissenbach J."/>
            <person name="Marliere P."/>
            <person name="Cohen G.N."/>
            <person name="Medigue C."/>
        </authorList>
    </citation>
    <scope>NUCLEOTIDE SEQUENCE [LARGE SCALE GENOMIC DNA]</scope>
    <source>
        <strain>ATCC 33305 / BD413 / ADP1</strain>
    </source>
</reference>
<dbReference type="EC" id="7.1.1.-" evidence="1"/>
<dbReference type="EMBL" id="CR543861">
    <property type="protein sequence ID" value="CAG67639.1"/>
    <property type="molecule type" value="Genomic_DNA"/>
</dbReference>
<dbReference type="RefSeq" id="WP_004922523.1">
    <property type="nucleotide sequence ID" value="NC_005966.1"/>
</dbReference>
<dbReference type="SMR" id="Q6FE69"/>
<dbReference type="STRING" id="202950.GCA_001485005_02489"/>
<dbReference type="GeneID" id="45233198"/>
<dbReference type="KEGG" id="aci:ACIAD0733"/>
<dbReference type="eggNOG" id="COG0649">
    <property type="taxonomic scope" value="Bacteria"/>
</dbReference>
<dbReference type="eggNOG" id="COG0852">
    <property type="taxonomic scope" value="Bacteria"/>
</dbReference>
<dbReference type="HOGENOM" id="CLU_015134_3_2_6"/>
<dbReference type="OrthoDB" id="9801496at2"/>
<dbReference type="BioCyc" id="ASP62977:ACIAD_RS03350-MONOMER"/>
<dbReference type="Proteomes" id="UP000000430">
    <property type="component" value="Chromosome"/>
</dbReference>
<dbReference type="GO" id="GO:0030964">
    <property type="term" value="C:NADH dehydrogenase complex"/>
    <property type="evidence" value="ECO:0007669"/>
    <property type="project" value="InterPro"/>
</dbReference>
<dbReference type="GO" id="GO:0005886">
    <property type="term" value="C:plasma membrane"/>
    <property type="evidence" value="ECO:0007669"/>
    <property type="project" value="UniProtKB-SubCell"/>
</dbReference>
<dbReference type="GO" id="GO:0051287">
    <property type="term" value="F:NAD binding"/>
    <property type="evidence" value="ECO:0007669"/>
    <property type="project" value="InterPro"/>
</dbReference>
<dbReference type="GO" id="GO:0008137">
    <property type="term" value="F:NADH dehydrogenase (ubiquinone) activity"/>
    <property type="evidence" value="ECO:0007669"/>
    <property type="project" value="InterPro"/>
</dbReference>
<dbReference type="GO" id="GO:0050136">
    <property type="term" value="F:NADH:ubiquinone reductase (non-electrogenic) activity"/>
    <property type="evidence" value="ECO:0007669"/>
    <property type="project" value="UniProtKB-UniRule"/>
</dbReference>
<dbReference type="GO" id="GO:0048038">
    <property type="term" value="F:quinone binding"/>
    <property type="evidence" value="ECO:0007669"/>
    <property type="project" value="UniProtKB-KW"/>
</dbReference>
<dbReference type="FunFam" id="1.10.645.10:FF:000001">
    <property type="entry name" value="NADH-quinone oxidoreductase subunit C/D"/>
    <property type="match status" value="1"/>
</dbReference>
<dbReference type="Gene3D" id="1.10.645.10">
    <property type="entry name" value="Cytochrome-c3 Hydrogenase, chain B"/>
    <property type="match status" value="1"/>
</dbReference>
<dbReference type="Gene3D" id="3.30.460.80">
    <property type="entry name" value="NADH:ubiquinone oxidoreductase, 30kDa subunit"/>
    <property type="match status" value="1"/>
</dbReference>
<dbReference type="HAMAP" id="MF_01357">
    <property type="entry name" value="NDH1_NuoC"/>
    <property type="match status" value="1"/>
</dbReference>
<dbReference type="HAMAP" id="MF_01359">
    <property type="entry name" value="NDH1_NuoCD_1"/>
    <property type="match status" value="1"/>
</dbReference>
<dbReference type="HAMAP" id="MF_01358">
    <property type="entry name" value="NDH1_NuoD"/>
    <property type="match status" value="1"/>
</dbReference>
<dbReference type="InterPro" id="IPR010218">
    <property type="entry name" value="NADH_DH_suC"/>
</dbReference>
<dbReference type="InterPro" id="IPR023062">
    <property type="entry name" value="NADH_DH_suCD"/>
</dbReference>
<dbReference type="InterPro" id="IPR001135">
    <property type="entry name" value="NADH_Q_OxRdtase_suD"/>
</dbReference>
<dbReference type="InterPro" id="IPR037232">
    <property type="entry name" value="NADH_quin_OxRdtase_su_C/D-like"/>
</dbReference>
<dbReference type="InterPro" id="IPR001268">
    <property type="entry name" value="NADH_UbQ_OxRdtase_30kDa_su"/>
</dbReference>
<dbReference type="InterPro" id="IPR014029">
    <property type="entry name" value="NADH_UbQ_OxRdtase_49kDa_CS"/>
</dbReference>
<dbReference type="InterPro" id="IPR020396">
    <property type="entry name" value="NADH_UbQ_OxRdtase_CS"/>
</dbReference>
<dbReference type="InterPro" id="IPR022885">
    <property type="entry name" value="NDH1_su_D/H"/>
</dbReference>
<dbReference type="InterPro" id="IPR029014">
    <property type="entry name" value="NiFe-Hase_large"/>
</dbReference>
<dbReference type="NCBIfam" id="TIGR01961">
    <property type="entry name" value="NuoC_fam"/>
    <property type="match status" value="1"/>
</dbReference>
<dbReference type="NCBIfam" id="TIGR01962">
    <property type="entry name" value="NuoD"/>
    <property type="match status" value="1"/>
</dbReference>
<dbReference type="NCBIfam" id="NF004739">
    <property type="entry name" value="PRK06075.1"/>
    <property type="match status" value="1"/>
</dbReference>
<dbReference type="NCBIfam" id="NF008728">
    <property type="entry name" value="PRK11742.1"/>
    <property type="match status" value="1"/>
</dbReference>
<dbReference type="PANTHER" id="PTHR11993:SF45">
    <property type="entry name" value="NADH-QUINONE OXIDOREDUCTASE SUBUNIT C_D"/>
    <property type="match status" value="1"/>
</dbReference>
<dbReference type="PANTHER" id="PTHR11993">
    <property type="entry name" value="NADH-UBIQUINONE OXIDOREDUCTASE 49 KDA SUBUNIT"/>
    <property type="match status" value="1"/>
</dbReference>
<dbReference type="Pfam" id="PF00329">
    <property type="entry name" value="Complex1_30kDa"/>
    <property type="match status" value="1"/>
</dbReference>
<dbReference type="Pfam" id="PF00346">
    <property type="entry name" value="Complex1_49kDa"/>
    <property type="match status" value="1"/>
</dbReference>
<dbReference type="SUPFAM" id="SSF56762">
    <property type="entry name" value="HydB/Nqo4-like"/>
    <property type="match status" value="1"/>
</dbReference>
<dbReference type="SUPFAM" id="SSF143243">
    <property type="entry name" value="Nqo5-like"/>
    <property type="match status" value="1"/>
</dbReference>
<dbReference type="PROSITE" id="PS00542">
    <property type="entry name" value="COMPLEX1_30K"/>
    <property type="match status" value="1"/>
</dbReference>
<dbReference type="PROSITE" id="PS00535">
    <property type="entry name" value="COMPLEX1_49K"/>
    <property type="match status" value="1"/>
</dbReference>
<feature type="chain" id="PRO_0000358610" description="NADH-quinone oxidoreductase subunit C/D">
    <location>
        <begin position="1"/>
        <end position="595"/>
    </location>
</feature>
<feature type="region of interest" description="NADH dehydrogenase I subunit C" evidence="1">
    <location>
        <begin position="1"/>
        <end position="186"/>
    </location>
</feature>
<feature type="region of interest" description="NADH dehydrogenase I subunit D" evidence="1">
    <location>
        <begin position="210"/>
        <end position="595"/>
    </location>
</feature>
<name>NUOCD_ACIAD</name>
<evidence type="ECO:0000255" key="1">
    <source>
        <dbReference type="HAMAP-Rule" id="MF_01359"/>
    </source>
</evidence>
<comment type="function">
    <text evidence="1">NDH-1 shuttles electrons from NADH, via FMN and iron-sulfur (Fe-S) centers, to quinones in the respiratory chain. The immediate electron acceptor for the enzyme in this species is believed to be ubiquinone. Couples the redox reaction to proton translocation (for every two electrons transferred, four hydrogen ions are translocated across the cytoplasmic membrane), and thus conserves the redox energy in a proton gradient.</text>
</comment>
<comment type="catalytic activity">
    <reaction evidence="1">
        <text>a quinone + NADH + 5 H(+)(in) = a quinol + NAD(+) + 4 H(+)(out)</text>
        <dbReference type="Rhea" id="RHEA:57888"/>
        <dbReference type="ChEBI" id="CHEBI:15378"/>
        <dbReference type="ChEBI" id="CHEBI:24646"/>
        <dbReference type="ChEBI" id="CHEBI:57540"/>
        <dbReference type="ChEBI" id="CHEBI:57945"/>
        <dbReference type="ChEBI" id="CHEBI:132124"/>
    </reaction>
</comment>
<comment type="subunit">
    <text evidence="1">NDH-1 is composed of 13 different subunits. Subunits NuoB, CD, E, F, and G constitute the peripheral sector of the complex.</text>
</comment>
<comment type="subcellular location">
    <subcellularLocation>
        <location evidence="1">Cell inner membrane</location>
        <topology evidence="1">Peripheral membrane protein</topology>
        <orientation evidence="1">Cytoplasmic side</orientation>
    </subcellularLocation>
</comment>
<comment type="similarity">
    <text evidence="1">In the N-terminal section; belongs to the complex I 30 kDa subunit family.</text>
</comment>
<comment type="similarity">
    <text evidence="1">In the C-terminal section; belongs to the complex I 49 kDa subunit family.</text>
</comment>
<keyword id="KW-0997">Cell inner membrane</keyword>
<keyword id="KW-1003">Cell membrane</keyword>
<keyword id="KW-0472">Membrane</keyword>
<keyword id="KW-0511">Multifunctional enzyme</keyword>
<keyword id="KW-0520">NAD</keyword>
<keyword id="KW-0874">Quinone</keyword>
<keyword id="KW-1278">Translocase</keyword>
<keyword id="KW-0813">Transport</keyword>
<keyword id="KW-0830">Ubiquinone</keyword>